<organism>
    <name type="scientific">Peromyscus maniculatus</name>
    <name type="common">North American deer mouse</name>
    <dbReference type="NCBI Taxonomy" id="10042"/>
    <lineage>
        <taxon>Eukaryota</taxon>
        <taxon>Metazoa</taxon>
        <taxon>Chordata</taxon>
        <taxon>Craniata</taxon>
        <taxon>Vertebrata</taxon>
        <taxon>Euteleostomi</taxon>
        <taxon>Mammalia</taxon>
        <taxon>Eutheria</taxon>
        <taxon>Euarchontoglires</taxon>
        <taxon>Glires</taxon>
        <taxon>Rodentia</taxon>
        <taxon>Myomorpha</taxon>
        <taxon>Muroidea</taxon>
        <taxon>Cricetidae</taxon>
        <taxon>Neotominae</taxon>
        <taxon>Peromyscus</taxon>
    </lineage>
</organism>
<feature type="initiator methionine" description="Removed" evidence="3">
    <location>
        <position position="1"/>
    </location>
</feature>
<feature type="chain" id="PRO_0000160667" description="Alcohol dehydrogenase 1">
    <location>
        <begin position="2"/>
        <end position="375"/>
    </location>
</feature>
<feature type="binding site" evidence="1">
    <location>
        <position position="47"/>
    </location>
    <ligand>
        <name>Zn(2+)</name>
        <dbReference type="ChEBI" id="CHEBI:29105"/>
        <label>1</label>
        <note>catalytic</note>
    </ligand>
</feature>
<feature type="binding site" evidence="1">
    <location>
        <position position="68"/>
    </location>
    <ligand>
        <name>Zn(2+)</name>
        <dbReference type="ChEBI" id="CHEBI:29105"/>
        <label>1</label>
        <note>catalytic</note>
    </ligand>
</feature>
<feature type="binding site" evidence="1">
    <location>
        <position position="98"/>
    </location>
    <ligand>
        <name>Zn(2+)</name>
        <dbReference type="ChEBI" id="CHEBI:29105"/>
        <label>2</label>
    </ligand>
</feature>
<feature type="binding site" evidence="1">
    <location>
        <position position="101"/>
    </location>
    <ligand>
        <name>Zn(2+)</name>
        <dbReference type="ChEBI" id="CHEBI:29105"/>
        <label>2</label>
    </ligand>
</feature>
<feature type="binding site" evidence="1">
    <location>
        <position position="104"/>
    </location>
    <ligand>
        <name>Zn(2+)</name>
        <dbReference type="ChEBI" id="CHEBI:29105"/>
        <label>2</label>
    </ligand>
</feature>
<feature type="binding site" evidence="1">
    <location>
        <position position="112"/>
    </location>
    <ligand>
        <name>Zn(2+)</name>
        <dbReference type="ChEBI" id="CHEBI:29105"/>
        <label>2</label>
    </ligand>
</feature>
<feature type="binding site" evidence="1">
    <location>
        <position position="175"/>
    </location>
    <ligand>
        <name>Zn(2+)</name>
        <dbReference type="ChEBI" id="CHEBI:29105"/>
        <label>1</label>
        <note>catalytic</note>
    </ligand>
</feature>
<feature type="binding site" evidence="1">
    <location>
        <begin position="200"/>
        <end position="205"/>
    </location>
    <ligand>
        <name>NAD(+)</name>
        <dbReference type="ChEBI" id="CHEBI:57540"/>
    </ligand>
</feature>
<feature type="binding site" evidence="1">
    <location>
        <position position="224"/>
    </location>
    <ligand>
        <name>NAD(+)</name>
        <dbReference type="ChEBI" id="CHEBI:57540"/>
    </ligand>
</feature>
<feature type="binding site" evidence="1">
    <location>
        <position position="229"/>
    </location>
    <ligand>
        <name>NAD(+)</name>
        <dbReference type="ChEBI" id="CHEBI:57540"/>
    </ligand>
</feature>
<feature type="binding site" evidence="1">
    <location>
        <begin position="293"/>
        <end position="295"/>
    </location>
    <ligand>
        <name>NAD(+)</name>
        <dbReference type="ChEBI" id="CHEBI:57540"/>
    </ligand>
</feature>
<feature type="binding site" evidence="1">
    <location>
        <position position="370"/>
    </location>
    <ligand>
        <name>NAD(+)</name>
        <dbReference type="ChEBI" id="CHEBI:57540"/>
    </ligand>
</feature>
<feature type="modified residue" description="N-acetylserine" evidence="3">
    <location>
        <position position="2"/>
    </location>
</feature>
<feature type="modified residue" description="N6-succinyllysine" evidence="2">
    <location>
        <position position="234"/>
    </location>
</feature>
<feature type="modified residue" description="N6-succinyllysine" evidence="2">
    <location>
        <position position="340"/>
    </location>
</feature>
<proteinExistence type="evidence at transcript level"/>
<reference key="1">
    <citation type="journal article" date="1993" name="J. Biol. Chem.">
        <title>Molecular basis of the alcohol dehydrogenase-negative deer mouse. Evidence for deletion of the gene for class I enzyme and identification of a possible new enzyme class.</title>
        <authorList>
            <person name="Zheng Y.W."/>
            <person name="Bey M."/>
            <person name="Liu H."/>
            <person name="Felder M.R."/>
        </authorList>
    </citation>
    <scope>NUCLEOTIDE SEQUENCE [MRNA]</scope>
    <source>
        <tissue>Liver</tissue>
    </source>
</reference>
<evidence type="ECO:0000250" key="1"/>
<evidence type="ECO:0000250" key="2">
    <source>
        <dbReference type="UniProtKB" id="P00329"/>
    </source>
</evidence>
<evidence type="ECO:0000250" key="3">
    <source>
        <dbReference type="UniProtKB" id="P06757"/>
    </source>
</evidence>
<evidence type="ECO:0000305" key="4"/>
<name>ADH1_PERMA</name>
<accession>P41680</accession>
<comment type="catalytic activity">
    <reaction>
        <text>a primary alcohol + NAD(+) = an aldehyde + NADH + H(+)</text>
        <dbReference type="Rhea" id="RHEA:10736"/>
        <dbReference type="ChEBI" id="CHEBI:15378"/>
        <dbReference type="ChEBI" id="CHEBI:15734"/>
        <dbReference type="ChEBI" id="CHEBI:17478"/>
        <dbReference type="ChEBI" id="CHEBI:57540"/>
        <dbReference type="ChEBI" id="CHEBI:57945"/>
        <dbReference type="EC" id="1.1.1.1"/>
    </reaction>
</comment>
<comment type="catalytic activity">
    <reaction>
        <text>a secondary alcohol + NAD(+) = a ketone + NADH + H(+)</text>
        <dbReference type="Rhea" id="RHEA:10740"/>
        <dbReference type="ChEBI" id="CHEBI:15378"/>
        <dbReference type="ChEBI" id="CHEBI:17087"/>
        <dbReference type="ChEBI" id="CHEBI:35681"/>
        <dbReference type="ChEBI" id="CHEBI:57540"/>
        <dbReference type="ChEBI" id="CHEBI:57945"/>
        <dbReference type="EC" id="1.1.1.1"/>
    </reaction>
</comment>
<comment type="cofactor">
    <cofactor evidence="1">
        <name>Zn(2+)</name>
        <dbReference type="ChEBI" id="CHEBI:29105"/>
    </cofactor>
    <text evidence="1">Binds 2 Zn(2+) ions per subunit.</text>
</comment>
<comment type="subcellular location">
    <subcellularLocation>
        <location>Cytoplasm</location>
    </subcellularLocation>
</comment>
<comment type="similarity">
    <text evidence="4">Belongs to the zinc-containing alcohol dehydrogenase family. Class-I subfamily.</text>
</comment>
<protein>
    <recommendedName>
        <fullName>Alcohol dehydrogenase 1</fullName>
        <ecNumber>1.1.1.1</ecNumber>
    </recommendedName>
    <alternativeName>
        <fullName>Alcohol dehydrogenase A subunit</fullName>
    </alternativeName>
</protein>
<keyword id="KW-0007">Acetylation</keyword>
<keyword id="KW-0963">Cytoplasm</keyword>
<keyword id="KW-0479">Metal-binding</keyword>
<keyword id="KW-0520">NAD</keyword>
<keyword id="KW-0560">Oxidoreductase</keyword>
<keyword id="KW-0862">Zinc</keyword>
<gene>
    <name type="primary">ADH1</name>
    <name type="synonym">ADH-1</name>
</gene>
<dbReference type="EC" id="1.1.1.1"/>
<dbReference type="EMBL" id="L15703">
    <property type="protein sequence ID" value="AAA40591.1"/>
    <property type="molecule type" value="mRNA"/>
</dbReference>
<dbReference type="PIR" id="A49107">
    <property type="entry name" value="A49107"/>
</dbReference>
<dbReference type="SMR" id="P41680"/>
<dbReference type="GO" id="GO:0005829">
    <property type="term" value="C:cytosol"/>
    <property type="evidence" value="ECO:0007669"/>
    <property type="project" value="TreeGrafter"/>
</dbReference>
<dbReference type="GO" id="GO:0004745">
    <property type="term" value="F:all-trans-retinol dehydrogenase (NAD+) activity"/>
    <property type="evidence" value="ECO:0007669"/>
    <property type="project" value="TreeGrafter"/>
</dbReference>
<dbReference type="GO" id="GO:0008270">
    <property type="term" value="F:zinc ion binding"/>
    <property type="evidence" value="ECO:0007669"/>
    <property type="project" value="InterPro"/>
</dbReference>
<dbReference type="GO" id="GO:0042573">
    <property type="term" value="P:retinoic acid metabolic process"/>
    <property type="evidence" value="ECO:0007669"/>
    <property type="project" value="TreeGrafter"/>
</dbReference>
<dbReference type="GO" id="GO:0042572">
    <property type="term" value="P:retinol metabolic process"/>
    <property type="evidence" value="ECO:0007669"/>
    <property type="project" value="TreeGrafter"/>
</dbReference>
<dbReference type="CDD" id="cd08299">
    <property type="entry name" value="alcohol_DH_class_I_II_IV"/>
    <property type="match status" value="1"/>
</dbReference>
<dbReference type="FunFam" id="3.40.50.720:FF:000003">
    <property type="entry name" value="S-(hydroxymethyl)glutathione dehydrogenase"/>
    <property type="match status" value="1"/>
</dbReference>
<dbReference type="FunFam" id="3.90.180.10:FF:000001">
    <property type="entry name" value="S-(hydroxymethyl)glutathione dehydrogenase"/>
    <property type="match status" value="1"/>
</dbReference>
<dbReference type="Gene3D" id="3.90.180.10">
    <property type="entry name" value="Medium-chain alcohol dehydrogenases, catalytic domain"/>
    <property type="match status" value="1"/>
</dbReference>
<dbReference type="Gene3D" id="3.40.50.720">
    <property type="entry name" value="NAD(P)-binding Rossmann-like Domain"/>
    <property type="match status" value="1"/>
</dbReference>
<dbReference type="InterPro" id="IPR013149">
    <property type="entry name" value="ADH-like_C"/>
</dbReference>
<dbReference type="InterPro" id="IPR013154">
    <property type="entry name" value="ADH-like_N"/>
</dbReference>
<dbReference type="InterPro" id="IPR002328">
    <property type="entry name" value="ADH_Zn_CS"/>
</dbReference>
<dbReference type="InterPro" id="IPR011032">
    <property type="entry name" value="GroES-like_sf"/>
</dbReference>
<dbReference type="InterPro" id="IPR036291">
    <property type="entry name" value="NAD(P)-bd_dom_sf"/>
</dbReference>
<dbReference type="InterPro" id="IPR020843">
    <property type="entry name" value="PKS_ER"/>
</dbReference>
<dbReference type="PANTHER" id="PTHR43880">
    <property type="entry name" value="ALCOHOL DEHYDROGENASE"/>
    <property type="match status" value="1"/>
</dbReference>
<dbReference type="PANTHER" id="PTHR43880:SF1">
    <property type="entry name" value="ALCOHOL DEHYDROGENASE 1A"/>
    <property type="match status" value="1"/>
</dbReference>
<dbReference type="Pfam" id="PF08240">
    <property type="entry name" value="ADH_N"/>
    <property type="match status" value="1"/>
</dbReference>
<dbReference type="Pfam" id="PF00107">
    <property type="entry name" value="ADH_zinc_N"/>
    <property type="match status" value="1"/>
</dbReference>
<dbReference type="SMART" id="SM00829">
    <property type="entry name" value="PKS_ER"/>
    <property type="match status" value="1"/>
</dbReference>
<dbReference type="SUPFAM" id="SSF50129">
    <property type="entry name" value="GroES-like"/>
    <property type="match status" value="2"/>
</dbReference>
<dbReference type="SUPFAM" id="SSF51735">
    <property type="entry name" value="NAD(P)-binding Rossmann-fold domains"/>
    <property type="match status" value="1"/>
</dbReference>
<dbReference type="PROSITE" id="PS00059">
    <property type="entry name" value="ADH_ZINC"/>
    <property type="match status" value="1"/>
</dbReference>
<sequence length="375" mass="39834">MSTAGKVIKCKAAVLWEPHKPFSIEDIEVAPPKAHEVRIKMVATGVCRSDDHVVSRSLASPLPAVLGHEGAGIVESVGEGVTSVKPGDKVIPLFTPQCGKCRICKHPEYNLCMKNDLMQPRGTLLDGTSRFTCRGKAIHNFISTSTFSQYTVVDEMAVAKIDGASPLEKVCLIGCGFSTGYGSAVKVAKVTPGSTCAVFGLGGVGLSVIIGCKAAGAARIIAVDINKDKFAKAKELGATECINPLDYSKPIQEVLQEMTDGGVDFSFEVIGRLDTMTSSLLSCHASCGVSVIVGVPPNAQSLSVNPMSLLMGRSWKGAIFGGFKSKDSVPKLVTDFMAKKFPLEPLITHVLPFEKINEAFDLLRAGKSIRTVLTF</sequence>